<feature type="chain" id="PRO_0000337431" description="Elongation factor Tu">
    <location>
        <begin position="1"/>
        <end position="396"/>
    </location>
</feature>
<feature type="domain" description="tr-type G">
    <location>
        <begin position="10"/>
        <end position="206"/>
    </location>
</feature>
<feature type="region of interest" description="G1" evidence="1">
    <location>
        <begin position="19"/>
        <end position="26"/>
    </location>
</feature>
<feature type="region of interest" description="G2" evidence="1">
    <location>
        <begin position="60"/>
        <end position="64"/>
    </location>
</feature>
<feature type="region of interest" description="G3" evidence="1">
    <location>
        <begin position="81"/>
        <end position="84"/>
    </location>
</feature>
<feature type="region of interest" description="G4" evidence="1">
    <location>
        <begin position="136"/>
        <end position="139"/>
    </location>
</feature>
<feature type="region of interest" description="G5" evidence="1">
    <location>
        <begin position="174"/>
        <end position="176"/>
    </location>
</feature>
<feature type="binding site" evidence="2">
    <location>
        <begin position="19"/>
        <end position="26"/>
    </location>
    <ligand>
        <name>GTP</name>
        <dbReference type="ChEBI" id="CHEBI:37565"/>
    </ligand>
</feature>
<feature type="binding site" evidence="2">
    <location>
        <position position="26"/>
    </location>
    <ligand>
        <name>Mg(2+)</name>
        <dbReference type="ChEBI" id="CHEBI:18420"/>
    </ligand>
</feature>
<feature type="binding site" evidence="2">
    <location>
        <begin position="81"/>
        <end position="85"/>
    </location>
    <ligand>
        <name>GTP</name>
        <dbReference type="ChEBI" id="CHEBI:37565"/>
    </ligand>
</feature>
<feature type="binding site" evidence="2">
    <location>
        <begin position="136"/>
        <end position="139"/>
    </location>
    <ligand>
        <name>GTP</name>
        <dbReference type="ChEBI" id="CHEBI:37565"/>
    </ligand>
</feature>
<protein>
    <recommendedName>
        <fullName evidence="2">Elongation factor Tu</fullName>
        <shortName evidence="2">EF-Tu</shortName>
        <ecNumber evidence="2">3.6.5.3</ecNumber>
    </recommendedName>
</protein>
<reference key="1">
    <citation type="journal article" date="2007" name="J. Bacteriol.">
        <title>Whole-genome analysis of the methyl tert-butyl ether-degrading beta-proteobacterium Methylibium petroleiphilum PM1.</title>
        <authorList>
            <person name="Kane S.R."/>
            <person name="Chakicherla A.Y."/>
            <person name="Chain P.S.G."/>
            <person name="Schmidt R."/>
            <person name="Shin M.W."/>
            <person name="Legler T.C."/>
            <person name="Scow K.M."/>
            <person name="Larimer F.W."/>
            <person name="Lucas S.M."/>
            <person name="Richardson P.M."/>
            <person name="Hristova K.R."/>
        </authorList>
    </citation>
    <scope>NUCLEOTIDE SEQUENCE [LARGE SCALE GENOMIC DNA]</scope>
    <source>
        <strain>ATCC BAA-1232 / LMG 22953 / PM1</strain>
    </source>
</reference>
<name>EFTU_METPP</name>
<comment type="function">
    <text evidence="2">GTP hydrolase that promotes the GTP-dependent binding of aminoacyl-tRNA to the A-site of ribosomes during protein biosynthesis.</text>
</comment>
<comment type="catalytic activity">
    <reaction evidence="2">
        <text>GTP + H2O = GDP + phosphate + H(+)</text>
        <dbReference type="Rhea" id="RHEA:19669"/>
        <dbReference type="ChEBI" id="CHEBI:15377"/>
        <dbReference type="ChEBI" id="CHEBI:15378"/>
        <dbReference type="ChEBI" id="CHEBI:37565"/>
        <dbReference type="ChEBI" id="CHEBI:43474"/>
        <dbReference type="ChEBI" id="CHEBI:58189"/>
        <dbReference type="EC" id="3.6.5.3"/>
    </reaction>
    <physiologicalReaction direction="left-to-right" evidence="2">
        <dbReference type="Rhea" id="RHEA:19670"/>
    </physiologicalReaction>
</comment>
<comment type="subunit">
    <text evidence="2">Monomer.</text>
</comment>
<comment type="subcellular location">
    <subcellularLocation>
        <location evidence="2">Cytoplasm</location>
    </subcellularLocation>
</comment>
<comment type="similarity">
    <text evidence="2">Belongs to the TRAFAC class translation factor GTPase superfamily. Classic translation factor GTPase family. EF-Tu/EF-1A subfamily.</text>
</comment>
<sequence length="396" mass="43088">MAKSKFERTKPHVNVGTIGHVDHGKTTLTAAITTILSSKFGGEAKAYDQIDAAPEEKARGITINTAHVEYETANRHYAHVDCPGHADYVKNMITGAAQMDGAILVCSAADGPMPQTREHILLARQVGVPYIIVFLNKCDMVDDAELLELVEMEVRELLDKYEFPGDATPIVHGSAKLALEGDKGELGEQAIMKLAEALDSYIPTPERAVDGAFLMPVEDVFSISGRGTVVTGRVERGIIKVGEEIEIVGISATQKTTCTGVEMFRKLLDQGQAGDNVGILLRGTKREDVQRGQVLCKPGSVKPHTHFTAEIYVLSKEEGGRHTPFFNNYRPQFYFRTTDVTGAVELPKDKEMVMPGDNVSITVKLINPIAMEEGLRFAIREGGRTVGAGVVAKIIE</sequence>
<keyword id="KW-0963">Cytoplasm</keyword>
<keyword id="KW-0251">Elongation factor</keyword>
<keyword id="KW-0342">GTP-binding</keyword>
<keyword id="KW-0378">Hydrolase</keyword>
<keyword id="KW-0460">Magnesium</keyword>
<keyword id="KW-0479">Metal-binding</keyword>
<keyword id="KW-0547">Nucleotide-binding</keyword>
<keyword id="KW-0648">Protein biosynthesis</keyword>
<keyword id="KW-1185">Reference proteome</keyword>
<accession>A2SLF9</accession>
<dbReference type="EC" id="3.6.5.3" evidence="2"/>
<dbReference type="EMBL" id="CP000555">
    <property type="protein sequence ID" value="ABM96398.1"/>
    <property type="molecule type" value="Genomic_DNA"/>
</dbReference>
<dbReference type="EMBL" id="CP000555">
    <property type="protein sequence ID" value="ABM96411.1"/>
    <property type="molecule type" value="Genomic_DNA"/>
</dbReference>
<dbReference type="SMR" id="A2SLF9"/>
<dbReference type="STRING" id="420662.Mpe_A3445"/>
<dbReference type="KEGG" id="mpt:Mpe_A3445"/>
<dbReference type="KEGG" id="mpt:Mpe_A3458"/>
<dbReference type="eggNOG" id="COG0050">
    <property type="taxonomic scope" value="Bacteria"/>
</dbReference>
<dbReference type="HOGENOM" id="CLU_007265_0_0_4"/>
<dbReference type="Proteomes" id="UP000000366">
    <property type="component" value="Chromosome"/>
</dbReference>
<dbReference type="GO" id="GO:0005829">
    <property type="term" value="C:cytosol"/>
    <property type="evidence" value="ECO:0007669"/>
    <property type="project" value="TreeGrafter"/>
</dbReference>
<dbReference type="GO" id="GO:0005525">
    <property type="term" value="F:GTP binding"/>
    <property type="evidence" value="ECO:0007669"/>
    <property type="project" value="UniProtKB-UniRule"/>
</dbReference>
<dbReference type="GO" id="GO:0003924">
    <property type="term" value="F:GTPase activity"/>
    <property type="evidence" value="ECO:0007669"/>
    <property type="project" value="InterPro"/>
</dbReference>
<dbReference type="GO" id="GO:0097216">
    <property type="term" value="F:guanosine tetraphosphate binding"/>
    <property type="evidence" value="ECO:0007669"/>
    <property type="project" value="UniProtKB-ARBA"/>
</dbReference>
<dbReference type="GO" id="GO:0003746">
    <property type="term" value="F:translation elongation factor activity"/>
    <property type="evidence" value="ECO:0007669"/>
    <property type="project" value="UniProtKB-UniRule"/>
</dbReference>
<dbReference type="CDD" id="cd01884">
    <property type="entry name" value="EF_Tu"/>
    <property type="match status" value="1"/>
</dbReference>
<dbReference type="CDD" id="cd03697">
    <property type="entry name" value="EFTU_II"/>
    <property type="match status" value="1"/>
</dbReference>
<dbReference type="CDD" id="cd03707">
    <property type="entry name" value="EFTU_III"/>
    <property type="match status" value="1"/>
</dbReference>
<dbReference type="FunFam" id="2.40.30.10:FF:000001">
    <property type="entry name" value="Elongation factor Tu"/>
    <property type="match status" value="1"/>
</dbReference>
<dbReference type="FunFam" id="3.40.50.300:FF:000003">
    <property type="entry name" value="Elongation factor Tu"/>
    <property type="match status" value="1"/>
</dbReference>
<dbReference type="Gene3D" id="3.40.50.300">
    <property type="entry name" value="P-loop containing nucleotide triphosphate hydrolases"/>
    <property type="match status" value="1"/>
</dbReference>
<dbReference type="Gene3D" id="2.40.30.10">
    <property type="entry name" value="Translation factors"/>
    <property type="match status" value="2"/>
</dbReference>
<dbReference type="HAMAP" id="MF_00118_B">
    <property type="entry name" value="EF_Tu_B"/>
    <property type="match status" value="1"/>
</dbReference>
<dbReference type="InterPro" id="IPR041709">
    <property type="entry name" value="EF-Tu_GTP-bd"/>
</dbReference>
<dbReference type="InterPro" id="IPR050055">
    <property type="entry name" value="EF-Tu_GTPase"/>
</dbReference>
<dbReference type="InterPro" id="IPR004161">
    <property type="entry name" value="EFTu-like_2"/>
</dbReference>
<dbReference type="InterPro" id="IPR033720">
    <property type="entry name" value="EFTU_2"/>
</dbReference>
<dbReference type="InterPro" id="IPR031157">
    <property type="entry name" value="G_TR_CS"/>
</dbReference>
<dbReference type="InterPro" id="IPR027417">
    <property type="entry name" value="P-loop_NTPase"/>
</dbReference>
<dbReference type="InterPro" id="IPR005225">
    <property type="entry name" value="Small_GTP-bd"/>
</dbReference>
<dbReference type="InterPro" id="IPR000795">
    <property type="entry name" value="T_Tr_GTP-bd_dom"/>
</dbReference>
<dbReference type="InterPro" id="IPR009000">
    <property type="entry name" value="Transl_B-barrel_sf"/>
</dbReference>
<dbReference type="InterPro" id="IPR009001">
    <property type="entry name" value="Transl_elong_EF1A/Init_IF2_C"/>
</dbReference>
<dbReference type="InterPro" id="IPR004541">
    <property type="entry name" value="Transl_elong_EFTu/EF1A_bac/org"/>
</dbReference>
<dbReference type="InterPro" id="IPR004160">
    <property type="entry name" value="Transl_elong_EFTu/EF1A_C"/>
</dbReference>
<dbReference type="NCBIfam" id="TIGR00485">
    <property type="entry name" value="EF-Tu"/>
    <property type="match status" value="1"/>
</dbReference>
<dbReference type="NCBIfam" id="NF000766">
    <property type="entry name" value="PRK00049.1"/>
    <property type="match status" value="1"/>
</dbReference>
<dbReference type="NCBIfam" id="NF009372">
    <property type="entry name" value="PRK12735.1"/>
    <property type="match status" value="1"/>
</dbReference>
<dbReference type="NCBIfam" id="NF009373">
    <property type="entry name" value="PRK12736.1"/>
    <property type="match status" value="1"/>
</dbReference>
<dbReference type="NCBIfam" id="TIGR00231">
    <property type="entry name" value="small_GTP"/>
    <property type="match status" value="1"/>
</dbReference>
<dbReference type="PANTHER" id="PTHR43721:SF22">
    <property type="entry name" value="ELONGATION FACTOR TU, MITOCHONDRIAL"/>
    <property type="match status" value="1"/>
</dbReference>
<dbReference type="PANTHER" id="PTHR43721">
    <property type="entry name" value="ELONGATION FACTOR TU-RELATED"/>
    <property type="match status" value="1"/>
</dbReference>
<dbReference type="Pfam" id="PF00009">
    <property type="entry name" value="GTP_EFTU"/>
    <property type="match status" value="1"/>
</dbReference>
<dbReference type="Pfam" id="PF03144">
    <property type="entry name" value="GTP_EFTU_D2"/>
    <property type="match status" value="1"/>
</dbReference>
<dbReference type="Pfam" id="PF03143">
    <property type="entry name" value="GTP_EFTU_D3"/>
    <property type="match status" value="1"/>
</dbReference>
<dbReference type="PRINTS" id="PR00315">
    <property type="entry name" value="ELONGATNFCT"/>
</dbReference>
<dbReference type="SUPFAM" id="SSF50465">
    <property type="entry name" value="EF-Tu/eEF-1alpha/eIF2-gamma C-terminal domain"/>
    <property type="match status" value="1"/>
</dbReference>
<dbReference type="SUPFAM" id="SSF52540">
    <property type="entry name" value="P-loop containing nucleoside triphosphate hydrolases"/>
    <property type="match status" value="1"/>
</dbReference>
<dbReference type="SUPFAM" id="SSF50447">
    <property type="entry name" value="Translation proteins"/>
    <property type="match status" value="1"/>
</dbReference>
<dbReference type="PROSITE" id="PS00301">
    <property type="entry name" value="G_TR_1"/>
    <property type="match status" value="1"/>
</dbReference>
<dbReference type="PROSITE" id="PS51722">
    <property type="entry name" value="G_TR_2"/>
    <property type="match status" value="1"/>
</dbReference>
<gene>
    <name evidence="2" type="primary">tuf1</name>
    <name type="ordered locus">Mpe_A3445</name>
</gene>
<gene>
    <name evidence="2" type="primary">tuf2</name>
    <name type="ordered locus">Mpe_A3458</name>
</gene>
<organism>
    <name type="scientific">Methylibium petroleiphilum (strain ATCC BAA-1232 / LMG 22953 / PM1)</name>
    <dbReference type="NCBI Taxonomy" id="420662"/>
    <lineage>
        <taxon>Bacteria</taxon>
        <taxon>Pseudomonadati</taxon>
        <taxon>Pseudomonadota</taxon>
        <taxon>Betaproteobacteria</taxon>
        <taxon>Burkholderiales</taxon>
        <taxon>Sphaerotilaceae</taxon>
        <taxon>Methylibium</taxon>
    </lineage>
</organism>
<proteinExistence type="inferred from homology"/>
<evidence type="ECO:0000250" key="1"/>
<evidence type="ECO:0000255" key="2">
    <source>
        <dbReference type="HAMAP-Rule" id="MF_00118"/>
    </source>
</evidence>